<sequence length="115" mass="13130">MSNIIKQLEQEQMKQNVPSFRPGDTVEVKVWVVEGTKKRLQAFEGVVIAIRNRGLHSAFTVRKISNGEGVERVFQTHSPVVDSIAVKRRGAVRKAKLYYLRERTGKAARIKERLN</sequence>
<gene>
    <name evidence="1" type="primary">rplS</name>
    <name type="ordered locus">SSPA2357</name>
</gene>
<reference key="1">
    <citation type="journal article" date="2009" name="BMC Genomics">
        <title>Pseudogene accumulation in the evolutionary histories of Salmonella enterica serovars Paratyphi A and Typhi.</title>
        <authorList>
            <person name="Holt K.E."/>
            <person name="Thomson N.R."/>
            <person name="Wain J."/>
            <person name="Langridge G.C."/>
            <person name="Hasan R."/>
            <person name="Bhutta Z.A."/>
            <person name="Quail M.A."/>
            <person name="Norbertczak H."/>
            <person name="Walker D."/>
            <person name="Simmonds M."/>
            <person name="White B."/>
            <person name="Bason N."/>
            <person name="Mungall K."/>
            <person name="Dougan G."/>
            <person name="Parkhill J."/>
        </authorList>
    </citation>
    <scope>NUCLEOTIDE SEQUENCE [LARGE SCALE GENOMIC DNA]</scope>
    <source>
        <strain>AKU_12601</strain>
    </source>
</reference>
<protein>
    <recommendedName>
        <fullName evidence="1">Large ribosomal subunit protein bL19</fullName>
    </recommendedName>
    <alternativeName>
        <fullName evidence="2">50S ribosomal protein L19</fullName>
    </alternativeName>
</protein>
<accession>B5BE91</accession>
<organism>
    <name type="scientific">Salmonella paratyphi A (strain AKU_12601)</name>
    <dbReference type="NCBI Taxonomy" id="554290"/>
    <lineage>
        <taxon>Bacteria</taxon>
        <taxon>Pseudomonadati</taxon>
        <taxon>Pseudomonadota</taxon>
        <taxon>Gammaproteobacteria</taxon>
        <taxon>Enterobacterales</taxon>
        <taxon>Enterobacteriaceae</taxon>
        <taxon>Salmonella</taxon>
    </lineage>
</organism>
<feature type="chain" id="PRO_1000193881" description="Large ribosomal subunit protein bL19">
    <location>
        <begin position="1"/>
        <end position="115"/>
    </location>
</feature>
<comment type="function">
    <text evidence="1">This protein is located at the 30S-50S ribosomal subunit interface and may play a role in the structure and function of the aminoacyl-tRNA binding site.</text>
</comment>
<comment type="similarity">
    <text evidence="1">Belongs to the bacterial ribosomal protein bL19 family.</text>
</comment>
<keyword id="KW-0687">Ribonucleoprotein</keyword>
<keyword id="KW-0689">Ribosomal protein</keyword>
<evidence type="ECO:0000255" key="1">
    <source>
        <dbReference type="HAMAP-Rule" id="MF_00402"/>
    </source>
</evidence>
<evidence type="ECO:0000305" key="2"/>
<proteinExistence type="inferred from homology"/>
<dbReference type="EMBL" id="FM200053">
    <property type="protein sequence ID" value="CAR60588.1"/>
    <property type="molecule type" value="Genomic_DNA"/>
</dbReference>
<dbReference type="RefSeq" id="WP_000065257.1">
    <property type="nucleotide sequence ID" value="NC_011147.1"/>
</dbReference>
<dbReference type="SMR" id="B5BE91"/>
<dbReference type="KEGG" id="sek:SSPA2357"/>
<dbReference type="HOGENOM" id="CLU_103507_2_1_6"/>
<dbReference type="Proteomes" id="UP000001869">
    <property type="component" value="Chromosome"/>
</dbReference>
<dbReference type="GO" id="GO:0022625">
    <property type="term" value="C:cytosolic large ribosomal subunit"/>
    <property type="evidence" value="ECO:0007669"/>
    <property type="project" value="TreeGrafter"/>
</dbReference>
<dbReference type="GO" id="GO:0003735">
    <property type="term" value="F:structural constituent of ribosome"/>
    <property type="evidence" value="ECO:0007669"/>
    <property type="project" value="InterPro"/>
</dbReference>
<dbReference type="GO" id="GO:0006412">
    <property type="term" value="P:translation"/>
    <property type="evidence" value="ECO:0007669"/>
    <property type="project" value="UniProtKB-UniRule"/>
</dbReference>
<dbReference type="FunFam" id="2.30.30.790:FF:000001">
    <property type="entry name" value="50S ribosomal protein L19"/>
    <property type="match status" value="1"/>
</dbReference>
<dbReference type="Gene3D" id="2.30.30.790">
    <property type="match status" value="1"/>
</dbReference>
<dbReference type="HAMAP" id="MF_00402">
    <property type="entry name" value="Ribosomal_bL19"/>
    <property type="match status" value="1"/>
</dbReference>
<dbReference type="InterPro" id="IPR001857">
    <property type="entry name" value="Ribosomal_bL19"/>
</dbReference>
<dbReference type="InterPro" id="IPR018257">
    <property type="entry name" value="Ribosomal_bL19_CS"/>
</dbReference>
<dbReference type="InterPro" id="IPR038657">
    <property type="entry name" value="Ribosomal_bL19_sf"/>
</dbReference>
<dbReference type="InterPro" id="IPR008991">
    <property type="entry name" value="Translation_prot_SH3-like_sf"/>
</dbReference>
<dbReference type="NCBIfam" id="TIGR01024">
    <property type="entry name" value="rplS_bact"/>
    <property type="match status" value="1"/>
</dbReference>
<dbReference type="PANTHER" id="PTHR15680:SF9">
    <property type="entry name" value="LARGE RIBOSOMAL SUBUNIT PROTEIN BL19M"/>
    <property type="match status" value="1"/>
</dbReference>
<dbReference type="PANTHER" id="PTHR15680">
    <property type="entry name" value="RIBOSOMAL PROTEIN L19"/>
    <property type="match status" value="1"/>
</dbReference>
<dbReference type="Pfam" id="PF01245">
    <property type="entry name" value="Ribosomal_L19"/>
    <property type="match status" value="1"/>
</dbReference>
<dbReference type="PIRSF" id="PIRSF002191">
    <property type="entry name" value="Ribosomal_L19"/>
    <property type="match status" value="1"/>
</dbReference>
<dbReference type="PRINTS" id="PR00061">
    <property type="entry name" value="RIBOSOMALL19"/>
</dbReference>
<dbReference type="SUPFAM" id="SSF50104">
    <property type="entry name" value="Translation proteins SH3-like domain"/>
    <property type="match status" value="1"/>
</dbReference>
<dbReference type="PROSITE" id="PS01015">
    <property type="entry name" value="RIBOSOMAL_L19"/>
    <property type="match status" value="1"/>
</dbReference>
<name>RL19_SALPK</name>